<accession>A5W9H9</accession>
<evidence type="ECO:0000255" key="1">
    <source>
        <dbReference type="HAMAP-Rule" id="MF_00049"/>
    </source>
</evidence>
<evidence type="ECO:0000305" key="2"/>
<organism>
    <name type="scientific">Pseudomonas putida (strain ATCC 700007 / DSM 6899 / JCM 31910 / BCRC 17059 / LMG 24140 / F1)</name>
    <dbReference type="NCBI Taxonomy" id="351746"/>
    <lineage>
        <taxon>Bacteria</taxon>
        <taxon>Pseudomonadati</taxon>
        <taxon>Pseudomonadota</taxon>
        <taxon>Gammaproteobacteria</taxon>
        <taxon>Pseudomonadales</taxon>
        <taxon>Pseudomonadaceae</taxon>
        <taxon>Pseudomonas</taxon>
    </lineage>
</organism>
<gene>
    <name evidence="1" type="primary">leuS</name>
    <name type="ordered locus">Pput_4669</name>
</gene>
<proteinExistence type="inferred from homology"/>
<comment type="catalytic activity">
    <reaction evidence="1">
        <text>tRNA(Leu) + L-leucine + ATP = L-leucyl-tRNA(Leu) + AMP + diphosphate</text>
        <dbReference type="Rhea" id="RHEA:11688"/>
        <dbReference type="Rhea" id="RHEA-COMP:9613"/>
        <dbReference type="Rhea" id="RHEA-COMP:9622"/>
        <dbReference type="ChEBI" id="CHEBI:30616"/>
        <dbReference type="ChEBI" id="CHEBI:33019"/>
        <dbReference type="ChEBI" id="CHEBI:57427"/>
        <dbReference type="ChEBI" id="CHEBI:78442"/>
        <dbReference type="ChEBI" id="CHEBI:78494"/>
        <dbReference type="ChEBI" id="CHEBI:456215"/>
        <dbReference type="EC" id="6.1.1.4"/>
    </reaction>
</comment>
<comment type="subcellular location">
    <subcellularLocation>
        <location evidence="1">Cytoplasm</location>
    </subcellularLocation>
</comment>
<comment type="similarity">
    <text evidence="1">Belongs to the class-I aminoacyl-tRNA synthetase family.</text>
</comment>
<comment type="sequence caution" evidence="2">
    <conflict type="erroneous initiation">
        <sequence resource="EMBL-CDS" id="ABQ80789"/>
    </conflict>
</comment>
<reference key="1">
    <citation type="submission" date="2007-05" db="EMBL/GenBank/DDBJ databases">
        <title>Complete sequence of Pseudomonas putida F1.</title>
        <authorList>
            <consortium name="US DOE Joint Genome Institute"/>
            <person name="Copeland A."/>
            <person name="Lucas S."/>
            <person name="Lapidus A."/>
            <person name="Barry K."/>
            <person name="Detter J.C."/>
            <person name="Glavina del Rio T."/>
            <person name="Hammon N."/>
            <person name="Israni S."/>
            <person name="Dalin E."/>
            <person name="Tice H."/>
            <person name="Pitluck S."/>
            <person name="Chain P."/>
            <person name="Malfatti S."/>
            <person name="Shin M."/>
            <person name="Vergez L."/>
            <person name="Schmutz J."/>
            <person name="Larimer F."/>
            <person name="Land M."/>
            <person name="Hauser L."/>
            <person name="Kyrpides N."/>
            <person name="Lykidis A."/>
            <person name="Parales R."/>
            <person name="Richardson P."/>
        </authorList>
    </citation>
    <scope>NUCLEOTIDE SEQUENCE [LARGE SCALE GENOMIC DNA]</scope>
    <source>
        <strain>ATCC 700007 / DSM 6899 / JCM 31910 / BCRC 17059 / LMG 24140 / F1</strain>
    </source>
</reference>
<protein>
    <recommendedName>
        <fullName evidence="1">Leucine--tRNA ligase</fullName>
        <ecNumber evidence="1">6.1.1.4</ecNumber>
    </recommendedName>
    <alternativeName>
        <fullName evidence="1">Leucyl-tRNA synthetase</fullName>
        <shortName evidence="1">LeuRS</shortName>
    </alternativeName>
</protein>
<sequence length="868" mass="96698">MHEQYTPRDIEAAAQKFWDEQQSFAVTEQPGKDTYYCLSMFPYPSGKLHMGHVRNYTIGDVIARYQRMLGKNVLQPMGWDAFGMPAENAAMKNNVAPAKWTYENIDYMKTQLKSLGLAIDWAREVTTCKPDYYRWEQWLFTRLFEKGIIYRKNGTVNWDPADQTVLANEQVIDGRGWRSGALIEKREIPMYYFRITDYADELLESLDELPGWPEQVKTMQRNWIGKSRGMEVQFPYDQASIGHEGTLKVFTTRPDTLMGATYVAVAAEHPLATQAAQGNPALQAFIDECKSGSVAEADMATQEKKGMATSLLVEHPLTGEKLPVWVANYVLMHYGDGAVMAVPAHDERDFEFAHKYNLPVKAVVRTSAGDEVGSEWQAAYGEHGQLINSAEFDGLDFAGAFDAIEAALIRKELGKSRTQFRLRDWGISRQRYWGCPIPIIHCPSCGDVPVPEDQLPVTLPENVVPDGAGSPLARMPEFYECSCPKCGAAAKRETDTMDTFVESSWYFARYASPNYDKGLVDPKAANHWLPVDQYIGGIEHAILHLLYARFFHKLMRDEGLVTSNEPFKNLLTQGMVVAETYYRVASNGGKDWFNPADVEIERDAKAKIIGARLKTDGLPVEIGGTEKMSKSKNNGVDPQSMIEAYGADTCRLFMMFASPPDMSLEWSDSGVEGASRFLRRVWRLAQAHVSQGLPGKLDVAALDDAQKVIRRAIHAAIKQASTDVGQFHKFNTAIAQVMTVMNVLEKAPQATEQDRALLQEGLEAVTLLLAPITPHISHALWQHLGHAGSVIDAAWPSVDEQALVQDSITLVVQVNGKLRGQVEMPAAASREEVEAAARSNENVLRFIDGLTIRKVIVVPGKLVNIVAN</sequence>
<dbReference type="EC" id="6.1.1.4" evidence="1"/>
<dbReference type="EMBL" id="CP000712">
    <property type="protein sequence ID" value="ABQ80789.1"/>
    <property type="status" value="ALT_INIT"/>
    <property type="molecule type" value="Genomic_DNA"/>
</dbReference>
<dbReference type="SMR" id="A5W9H9"/>
<dbReference type="KEGG" id="ppf:Pput_4669"/>
<dbReference type="eggNOG" id="COG0495">
    <property type="taxonomic scope" value="Bacteria"/>
</dbReference>
<dbReference type="HOGENOM" id="CLU_004427_0_0_6"/>
<dbReference type="GO" id="GO:0005829">
    <property type="term" value="C:cytosol"/>
    <property type="evidence" value="ECO:0007669"/>
    <property type="project" value="TreeGrafter"/>
</dbReference>
<dbReference type="GO" id="GO:0002161">
    <property type="term" value="F:aminoacyl-tRNA deacylase activity"/>
    <property type="evidence" value="ECO:0007669"/>
    <property type="project" value="InterPro"/>
</dbReference>
<dbReference type="GO" id="GO:0005524">
    <property type="term" value="F:ATP binding"/>
    <property type="evidence" value="ECO:0007669"/>
    <property type="project" value="UniProtKB-UniRule"/>
</dbReference>
<dbReference type="GO" id="GO:0004823">
    <property type="term" value="F:leucine-tRNA ligase activity"/>
    <property type="evidence" value="ECO:0007669"/>
    <property type="project" value="UniProtKB-UniRule"/>
</dbReference>
<dbReference type="GO" id="GO:0006429">
    <property type="term" value="P:leucyl-tRNA aminoacylation"/>
    <property type="evidence" value="ECO:0007669"/>
    <property type="project" value="UniProtKB-UniRule"/>
</dbReference>
<dbReference type="CDD" id="cd07958">
    <property type="entry name" value="Anticodon_Ia_Leu_BEm"/>
    <property type="match status" value="1"/>
</dbReference>
<dbReference type="CDD" id="cd00812">
    <property type="entry name" value="LeuRS_core"/>
    <property type="match status" value="1"/>
</dbReference>
<dbReference type="FunFam" id="1.10.730.10:FF:000003">
    <property type="entry name" value="Leucine--tRNA ligase"/>
    <property type="match status" value="1"/>
</dbReference>
<dbReference type="FunFam" id="2.20.28.290:FF:000001">
    <property type="entry name" value="Leucine--tRNA ligase"/>
    <property type="match status" value="1"/>
</dbReference>
<dbReference type="FunFam" id="3.10.20.590:FF:000001">
    <property type="entry name" value="Leucine--tRNA ligase"/>
    <property type="match status" value="1"/>
</dbReference>
<dbReference type="FunFam" id="3.40.50.620:FF:000003">
    <property type="entry name" value="Leucine--tRNA ligase"/>
    <property type="match status" value="1"/>
</dbReference>
<dbReference type="FunFam" id="3.40.50.620:FF:000124">
    <property type="entry name" value="Leucine--tRNA ligase"/>
    <property type="match status" value="1"/>
</dbReference>
<dbReference type="FunFam" id="3.90.740.10:FF:000012">
    <property type="entry name" value="Leucine--tRNA ligase"/>
    <property type="match status" value="1"/>
</dbReference>
<dbReference type="Gene3D" id="2.20.28.290">
    <property type="match status" value="1"/>
</dbReference>
<dbReference type="Gene3D" id="3.10.20.590">
    <property type="match status" value="1"/>
</dbReference>
<dbReference type="Gene3D" id="3.40.50.620">
    <property type="entry name" value="HUPs"/>
    <property type="match status" value="2"/>
</dbReference>
<dbReference type="Gene3D" id="1.10.730.10">
    <property type="entry name" value="Isoleucyl-tRNA Synthetase, Domain 1"/>
    <property type="match status" value="2"/>
</dbReference>
<dbReference type="Gene3D" id="3.90.740.10">
    <property type="entry name" value="Valyl/Leucyl/Isoleucyl-tRNA synthetase, editing domain"/>
    <property type="match status" value="1"/>
</dbReference>
<dbReference type="HAMAP" id="MF_00049_B">
    <property type="entry name" value="Leu_tRNA_synth_B"/>
    <property type="match status" value="1"/>
</dbReference>
<dbReference type="InterPro" id="IPR001412">
    <property type="entry name" value="aa-tRNA-synth_I_CS"/>
</dbReference>
<dbReference type="InterPro" id="IPR002300">
    <property type="entry name" value="aa-tRNA-synth_Ia"/>
</dbReference>
<dbReference type="InterPro" id="IPR002302">
    <property type="entry name" value="Leu-tRNA-ligase"/>
</dbReference>
<dbReference type="InterPro" id="IPR025709">
    <property type="entry name" value="Leu_tRNA-synth_edit"/>
</dbReference>
<dbReference type="InterPro" id="IPR013155">
    <property type="entry name" value="M/V/L/I-tRNA-synth_anticd-bd"/>
</dbReference>
<dbReference type="InterPro" id="IPR015413">
    <property type="entry name" value="Methionyl/Leucyl_tRNA_Synth"/>
</dbReference>
<dbReference type="InterPro" id="IPR014729">
    <property type="entry name" value="Rossmann-like_a/b/a_fold"/>
</dbReference>
<dbReference type="InterPro" id="IPR009080">
    <property type="entry name" value="tRNAsynth_Ia_anticodon-bd"/>
</dbReference>
<dbReference type="InterPro" id="IPR009008">
    <property type="entry name" value="Val/Leu/Ile-tRNA-synth_edit"/>
</dbReference>
<dbReference type="NCBIfam" id="TIGR00396">
    <property type="entry name" value="leuS_bact"/>
    <property type="match status" value="1"/>
</dbReference>
<dbReference type="PANTHER" id="PTHR43740:SF2">
    <property type="entry name" value="LEUCINE--TRNA LIGASE, MITOCHONDRIAL"/>
    <property type="match status" value="1"/>
</dbReference>
<dbReference type="PANTHER" id="PTHR43740">
    <property type="entry name" value="LEUCYL-TRNA SYNTHETASE"/>
    <property type="match status" value="1"/>
</dbReference>
<dbReference type="Pfam" id="PF08264">
    <property type="entry name" value="Anticodon_1"/>
    <property type="match status" value="1"/>
</dbReference>
<dbReference type="Pfam" id="PF00133">
    <property type="entry name" value="tRNA-synt_1"/>
    <property type="match status" value="2"/>
</dbReference>
<dbReference type="Pfam" id="PF13603">
    <property type="entry name" value="tRNA-synt_1_2"/>
    <property type="match status" value="1"/>
</dbReference>
<dbReference type="Pfam" id="PF09334">
    <property type="entry name" value="tRNA-synt_1g"/>
    <property type="match status" value="1"/>
</dbReference>
<dbReference type="PRINTS" id="PR00985">
    <property type="entry name" value="TRNASYNTHLEU"/>
</dbReference>
<dbReference type="SUPFAM" id="SSF47323">
    <property type="entry name" value="Anticodon-binding domain of a subclass of class I aminoacyl-tRNA synthetases"/>
    <property type="match status" value="1"/>
</dbReference>
<dbReference type="SUPFAM" id="SSF52374">
    <property type="entry name" value="Nucleotidylyl transferase"/>
    <property type="match status" value="1"/>
</dbReference>
<dbReference type="SUPFAM" id="SSF50677">
    <property type="entry name" value="ValRS/IleRS/LeuRS editing domain"/>
    <property type="match status" value="1"/>
</dbReference>
<dbReference type="PROSITE" id="PS00178">
    <property type="entry name" value="AA_TRNA_LIGASE_I"/>
    <property type="match status" value="1"/>
</dbReference>
<feature type="chain" id="PRO_0000334795" description="Leucine--tRNA ligase">
    <location>
        <begin position="1"/>
        <end position="868"/>
    </location>
</feature>
<feature type="short sequence motif" description="'HIGH' region">
    <location>
        <begin position="42"/>
        <end position="52"/>
    </location>
</feature>
<feature type="short sequence motif" description="'KMSKS' region">
    <location>
        <begin position="627"/>
        <end position="631"/>
    </location>
</feature>
<feature type="binding site" evidence="1">
    <location>
        <position position="630"/>
    </location>
    <ligand>
        <name>ATP</name>
        <dbReference type="ChEBI" id="CHEBI:30616"/>
    </ligand>
</feature>
<name>SYL_PSEP1</name>
<keyword id="KW-0030">Aminoacyl-tRNA synthetase</keyword>
<keyword id="KW-0067">ATP-binding</keyword>
<keyword id="KW-0963">Cytoplasm</keyword>
<keyword id="KW-0436">Ligase</keyword>
<keyword id="KW-0547">Nucleotide-binding</keyword>
<keyword id="KW-0648">Protein biosynthesis</keyword>